<protein>
    <recommendedName>
        <fullName evidence="1">Large ribosomal subunit protein uL11</fullName>
    </recommendedName>
    <alternativeName>
        <fullName evidence="2">50S ribosomal protein L11</fullName>
    </alternativeName>
</protein>
<accession>Q9PK76</accession>
<feature type="chain" id="PRO_0000104268" description="Large ribosomal subunit protein uL11">
    <location>
        <begin position="1"/>
        <end position="141"/>
    </location>
</feature>
<dbReference type="EMBL" id="AE002160">
    <property type="protein sequence ID" value="AAF39425.1"/>
    <property type="molecule type" value="Genomic_DNA"/>
</dbReference>
<dbReference type="PIR" id="C81685">
    <property type="entry name" value="C81685"/>
</dbReference>
<dbReference type="RefSeq" id="WP_010230923.1">
    <property type="nucleotide sequence ID" value="NZ_CP063055.1"/>
</dbReference>
<dbReference type="SMR" id="Q9PK76"/>
<dbReference type="GeneID" id="1245952"/>
<dbReference type="KEGG" id="cmu:TC_0593"/>
<dbReference type="eggNOG" id="COG0080">
    <property type="taxonomic scope" value="Bacteria"/>
</dbReference>
<dbReference type="HOGENOM" id="CLU_074237_2_0_0"/>
<dbReference type="OrthoDB" id="9802408at2"/>
<dbReference type="Proteomes" id="UP000000800">
    <property type="component" value="Chromosome"/>
</dbReference>
<dbReference type="GO" id="GO:0022625">
    <property type="term" value="C:cytosolic large ribosomal subunit"/>
    <property type="evidence" value="ECO:0007669"/>
    <property type="project" value="TreeGrafter"/>
</dbReference>
<dbReference type="GO" id="GO:0070180">
    <property type="term" value="F:large ribosomal subunit rRNA binding"/>
    <property type="evidence" value="ECO:0007669"/>
    <property type="project" value="UniProtKB-UniRule"/>
</dbReference>
<dbReference type="GO" id="GO:0003735">
    <property type="term" value="F:structural constituent of ribosome"/>
    <property type="evidence" value="ECO:0007669"/>
    <property type="project" value="InterPro"/>
</dbReference>
<dbReference type="GO" id="GO:0006412">
    <property type="term" value="P:translation"/>
    <property type="evidence" value="ECO:0007669"/>
    <property type="project" value="UniProtKB-UniRule"/>
</dbReference>
<dbReference type="CDD" id="cd00349">
    <property type="entry name" value="Ribosomal_L11"/>
    <property type="match status" value="1"/>
</dbReference>
<dbReference type="FunFam" id="1.10.10.250:FF:000001">
    <property type="entry name" value="50S ribosomal protein L11"/>
    <property type="match status" value="1"/>
</dbReference>
<dbReference type="FunFam" id="3.30.1550.10:FF:000001">
    <property type="entry name" value="50S ribosomal protein L11"/>
    <property type="match status" value="1"/>
</dbReference>
<dbReference type="Gene3D" id="1.10.10.250">
    <property type="entry name" value="Ribosomal protein L11, C-terminal domain"/>
    <property type="match status" value="1"/>
</dbReference>
<dbReference type="Gene3D" id="3.30.1550.10">
    <property type="entry name" value="Ribosomal protein L11/L12, N-terminal domain"/>
    <property type="match status" value="1"/>
</dbReference>
<dbReference type="HAMAP" id="MF_00736">
    <property type="entry name" value="Ribosomal_uL11"/>
    <property type="match status" value="1"/>
</dbReference>
<dbReference type="InterPro" id="IPR000911">
    <property type="entry name" value="Ribosomal_uL11"/>
</dbReference>
<dbReference type="InterPro" id="IPR006519">
    <property type="entry name" value="Ribosomal_uL11_bac-typ"/>
</dbReference>
<dbReference type="InterPro" id="IPR020783">
    <property type="entry name" value="Ribosomal_uL11_C"/>
</dbReference>
<dbReference type="InterPro" id="IPR036769">
    <property type="entry name" value="Ribosomal_uL11_C_sf"/>
</dbReference>
<dbReference type="InterPro" id="IPR020785">
    <property type="entry name" value="Ribosomal_uL11_CS"/>
</dbReference>
<dbReference type="InterPro" id="IPR020784">
    <property type="entry name" value="Ribosomal_uL11_N"/>
</dbReference>
<dbReference type="InterPro" id="IPR036796">
    <property type="entry name" value="Ribosomal_uL11_N_sf"/>
</dbReference>
<dbReference type="NCBIfam" id="TIGR01632">
    <property type="entry name" value="L11_bact"/>
    <property type="match status" value="1"/>
</dbReference>
<dbReference type="PANTHER" id="PTHR11661">
    <property type="entry name" value="60S RIBOSOMAL PROTEIN L12"/>
    <property type="match status" value="1"/>
</dbReference>
<dbReference type="PANTHER" id="PTHR11661:SF1">
    <property type="entry name" value="LARGE RIBOSOMAL SUBUNIT PROTEIN UL11M"/>
    <property type="match status" value="1"/>
</dbReference>
<dbReference type="Pfam" id="PF00298">
    <property type="entry name" value="Ribosomal_L11"/>
    <property type="match status" value="1"/>
</dbReference>
<dbReference type="Pfam" id="PF03946">
    <property type="entry name" value="Ribosomal_L11_N"/>
    <property type="match status" value="1"/>
</dbReference>
<dbReference type="SMART" id="SM00649">
    <property type="entry name" value="RL11"/>
    <property type="match status" value="1"/>
</dbReference>
<dbReference type="SUPFAM" id="SSF54747">
    <property type="entry name" value="Ribosomal L11/L12e N-terminal domain"/>
    <property type="match status" value="1"/>
</dbReference>
<dbReference type="SUPFAM" id="SSF46906">
    <property type="entry name" value="Ribosomal protein L11, C-terminal domain"/>
    <property type="match status" value="1"/>
</dbReference>
<dbReference type="PROSITE" id="PS00359">
    <property type="entry name" value="RIBOSOMAL_L11"/>
    <property type="match status" value="1"/>
</dbReference>
<reference key="1">
    <citation type="journal article" date="2000" name="Nucleic Acids Res.">
        <title>Genome sequences of Chlamydia trachomatis MoPn and Chlamydia pneumoniae AR39.</title>
        <authorList>
            <person name="Read T.D."/>
            <person name="Brunham R.C."/>
            <person name="Shen C."/>
            <person name="Gill S.R."/>
            <person name="Heidelberg J.F."/>
            <person name="White O."/>
            <person name="Hickey E.K."/>
            <person name="Peterson J.D."/>
            <person name="Utterback T.R."/>
            <person name="Berry K.J."/>
            <person name="Bass S."/>
            <person name="Linher K.D."/>
            <person name="Weidman J.F."/>
            <person name="Khouri H.M."/>
            <person name="Craven B."/>
            <person name="Bowman C."/>
            <person name="Dodson R.J."/>
            <person name="Gwinn M.L."/>
            <person name="Nelson W.C."/>
            <person name="DeBoy R.T."/>
            <person name="Kolonay J.F."/>
            <person name="McClarty G."/>
            <person name="Salzberg S.L."/>
            <person name="Eisen J.A."/>
            <person name="Fraser C.M."/>
        </authorList>
    </citation>
    <scope>NUCLEOTIDE SEQUENCE [LARGE SCALE GENOMIC DNA]</scope>
    <source>
        <strain>MoPn / Nigg</strain>
    </source>
</reference>
<name>RL11_CHLMU</name>
<comment type="function">
    <text evidence="1">Forms part of the ribosomal stalk which helps the ribosome interact with GTP-bound translation factors.</text>
</comment>
<comment type="subunit">
    <text evidence="1">Part of the ribosomal stalk of the 50S ribosomal subunit. Interacts with L10 and the large rRNA to form the base of the stalk. L10 forms an elongated spine to which L12 dimers bind in a sequential fashion forming a multimeric L10(L12)X complex.</text>
</comment>
<comment type="PTM">
    <text evidence="1">One or more lysine residues are methylated.</text>
</comment>
<comment type="similarity">
    <text evidence="1">Belongs to the universal ribosomal protein uL11 family.</text>
</comment>
<sequence length="141" mass="15034">MSNKKIIKIIKLQIPGGKANPAPPIGPALGAAGVNIMGFCKEFNAATQDRPGDLLPVVITVYSDKTFSFVMKQPPVSSLIKKALGLESGSKIPNRNKVGKLARAQITAIAEQKMKDMDVVLLESAERMVEGTARSMGVDVE</sequence>
<keyword id="KW-0488">Methylation</keyword>
<keyword id="KW-0687">Ribonucleoprotein</keyword>
<keyword id="KW-0689">Ribosomal protein</keyword>
<keyword id="KW-0694">RNA-binding</keyword>
<keyword id="KW-0699">rRNA-binding</keyword>
<proteinExistence type="inferred from homology"/>
<gene>
    <name evidence="1" type="primary">rplK</name>
    <name type="ordered locus">TC_0593</name>
</gene>
<organism>
    <name type="scientific">Chlamydia muridarum (strain MoPn / Nigg)</name>
    <dbReference type="NCBI Taxonomy" id="243161"/>
    <lineage>
        <taxon>Bacteria</taxon>
        <taxon>Pseudomonadati</taxon>
        <taxon>Chlamydiota</taxon>
        <taxon>Chlamydiia</taxon>
        <taxon>Chlamydiales</taxon>
        <taxon>Chlamydiaceae</taxon>
        <taxon>Chlamydia/Chlamydophila group</taxon>
        <taxon>Chlamydia</taxon>
    </lineage>
</organism>
<evidence type="ECO:0000255" key="1">
    <source>
        <dbReference type="HAMAP-Rule" id="MF_00736"/>
    </source>
</evidence>
<evidence type="ECO:0000305" key="2"/>